<keyword id="KW-0489">Methyltransferase</keyword>
<keyword id="KW-0949">S-adenosyl-L-methionine</keyword>
<keyword id="KW-0808">Transferase</keyword>
<reference key="1">
    <citation type="submission" date="2007-04" db="EMBL/GenBank/DDBJ databases">
        <title>Complete sequence of chromosome of Mycobacterium gilvum PYR-GCK.</title>
        <authorList>
            <consortium name="US DOE Joint Genome Institute"/>
            <person name="Copeland A."/>
            <person name="Lucas S."/>
            <person name="Lapidus A."/>
            <person name="Barry K."/>
            <person name="Detter J.C."/>
            <person name="Glavina del Rio T."/>
            <person name="Hammon N."/>
            <person name="Israni S."/>
            <person name="Dalin E."/>
            <person name="Tice H."/>
            <person name="Pitluck S."/>
            <person name="Chain P."/>
            <person name="Malfatti S."/>
            <person name="Shin M."/>
            <person name="Vergez L."/>
            <person name="Schmutz J."/>
            <person name="Larimer F."/>
            <person name="Land M."/>
            <person name="Hauser L."/>
            <person name="Kyrpides N."/>
            <person name="Mikhailova N."/>
            <person name="Miller C."/>
            <person name="Richardson P."/>
        </authorList>
    </citation>
    <scope>NUCLEOTIDE SEQUENCE [LARGE SCALE GENOMIC DNA]</scope>
    <source>
        <strain>PYR-GCK</strain>
    </source>
</reference>
<accession>A4TEC9</accession>
<organism>
    <name type="scientific">Mycolicibacterium gilvum (strain PYR-GCK)</name>
    <name type="common">Mycobacterium gilvum (strain PYR-GCK)</name>
    <dbReference type="NCBI Taxonomy" id="350054"/>
    <lineage>
        <taxon>Bacteria</taxon>
        <taxon>Bacillati</taxon>
        <taxon>Actinomycetota</taxon>
        <taxon>Actinomycetes</taxon>
        <taxon>Mycobacteriales</taxon>
        <taxon>Mycobacteriaceae</taxon>
        <taxon>Mycolicibacterium</taxon>
    </lineage>
</organism>
<dbReference type="EC" id="2.1.1.-"/>
<dbReference type="EMBL" id="CP000656">
    <property type="protein sequence ID" value="ABP47491.1"/>
    <property type="molecule type" value="Genomic_DNA"/>
</dbReference>
<dbReference type="SMR" id="A4TEC9"/>
<dbReference type="STRING" id="350054.Mflv_5025"/>
<dbReference type="KEGG" id="mgi:Mflv_5025"/>
<dbReference type="eggNOG" id="COG3315">
    <property type="taxonomic scope" value="Bacteria"/>
</dbReference>
<dbReference type="HOGENOM" id="CLU_056160_2_1_11"/>
<dbReference type="OrthoDB" id="9806164at2"/>
<dbReference type="GO" id="GO:0008168">
    <property type="term" value="F:methyltransferase activity"/>
    <property type="evidence" value="ECO:0007669"/>
    <property type="project" value="UniProtKB-KW"/>
</dbReference>
<dbReference type="GO" id="GO:0032259">
    <property type="term" value="P:methylation"/>
    <property type="evidence" value="ECO:0007669"/>
    <property type="project" value="UniProtKB-KW"/>
</dbReference>
<dbReference type="FunFam" id="3.40.50.150:FF:000152">
    <property type="entry name" value="S-adenosyl-L-methionine-dependent methyltransferase"/>
    <property type="match status" value="1"/>
</dbReference>
<dbReference type="Gene3D" id="3.40.50.150">
    <property type="entry name" value="Vaccinia Virus protein VP39"/>
    <property type="match status" value="1"/>
</dbReference>
<dbReference type="InterPro" id="IPR007213">
    <property type="entry name" value="Ppm1/Ppm2/Tcmp"/>
</dbReference>
<dbReference type="InterPro" id="IPR029063">
    <property type="entry name" value="SAM-dependent_MTases_sf"/>
</dbReference>
<dbReference type="InterPro" id="IPR011610">
    <property type="entry name" value="SAM_mthyl_Trfase_ML2640-like"/>
</dbReference>
<dbReference type="NCBIfam" id="TIGR00027">
    <property type="entry name" value="mthyl_TIGR00027"/>
    <property type="match status" value="1"/>
</dbReference>
<dbReference type="PANTHER" id="PTHR43619">
    <property type="entry name" value="S-ADENOSYL-L-METHIONINE-DEPENDENT METHYLTRANSFERASE YKTD-RELATED"/>
    <property type="match status" value="1"/>
</dbReference>
<dbReference type="PANTHER" id="PTHR43619:SF2">
    <property type="entry name" value="S-ADENOSYL-L-METHIONINE-DEPENDENT METHYLTRANSFERASES SUPERFAMILY PROTEIN"/>
    <property type="match status" value="1"/>
</dbReference>
<dbReference type="Pfam" id="PF04072">
    <property type="entry name" value="LCM"/>
    <property type="match status" value="1"/>
</dbReference>
<dbReference type="SUPFAM" id="SSF53335">
    <property type="entry name" value="S-adenosyl-L-methionine-dependent methyltransferases"/>
    <property type="match status" value="1"/>
</dbReference>
<sequence length="307" mass="32687">MARTPDDSWDLASSVGATATMVAAGRAVASADPDPLINDPYAEPLVRAVGLDFFTRMLDGELDLSVFPDSSPERAQAMIDGMAVRTRFFDDCCLAAASAGVRQVVILAAGLDARTYRLPWPDGTVVYELDQPDVIAFKTQTLRNLGAEPAATQRPVPVDLREDWPAALRAAGFDATRPTAWLAEGLLIYLPPEAQDALFDTVTALSAPGSTLATEYVPGIVDFDGAKARALSEPLREHGLDIDMPSLVYTGARTPVMDHLRGAGWQVSGTARAELFARFGRPLPQDADGTDPLGEIVYVSATLAADA</sequence>
<gene>
    <name type="ordered locus">Mflv_5025</name>
</gene>
<name>Y5025_MYCGI</name>
<comment type="function">
    <text evidence="1">Exhibits S-adenosyl-L-methionine-dependent methyltransferase activity.</text>
</comment>
<comment type="similarity">
    <text evidence="2">Belongs to the UPF0677 family.</text>
</comment>
<feature type="chain" id="PRO_0000361157" description="Putative S-adenosyl-L-methionine-dependent methyltransferase Mflv_5025">
    <location>
        <begin position="1"/>
        <end position="307"/>
    </location>
</feature>
<feature type="binding site" evidence="1">
    <location>
        <position position="130"/>
    </location>
    <ligand>
        <name>S-adenosyl-L-methionine</name>
        <dbReference type="ChEBI" id="CHEBI:59789"/>
    </ligand>
</feature>
<feature type="binding site" evidence="1">
    <location>
        <begin position="159"/>
        <end position="160"/>
    </location>
    <ligand>
        <name>S-adenosyl-L-methionine</name>
        <dbReference type="ChEBI" id="CHEBI:59789"/>
    </ligand>
</feature>
<evidence type="ECO:0000250" key="1"/>
<evidence type="ECO:0000305" key="2"/>
<protein>
    <recommendedName>
        <fullName>Putative S-adenosyl-L-methionine-dependent methyltransferase Mflv_5025</fullName>
        <ecNumber>2.1.1.-</ecNumber>
    </recommendedName>
</protein>
<proteinExistence type="inferred from homology"/>